<name>VATD_CHLAB</name>
<reference key="1">
    <citation type="journal article" date="2005" name="Genome Res.">
        <title>The Chlamydophila abortus genome sequence reveals an array of variable proteins that contribute to interspecies variation.</title>
        <authorList>
            <person name="Thomson N.R."/>
            <person name="Yeats C."/>
            <person name="Bell K."/>
            <person name="Holden M.T.G."/>
            <person name="Bentley S.D."/>
            <person name="Livingstone M."/>
            <person name="Cerdeno-Tarraga A.-M."/>
            <person name="Harris B."/>
            <person name="Doggett J."/>
            <person name="Ormond D."/>
            <person name="Mungall K."/>
            <person name="Clarke K."/>
            <person name="Feltwell T."/>
            <person name="Hance Z."/>
            <person name="Sanders M."/>
            <person name="Quail M.A."/>
            <person name="Price C."/>
            <person name="Barrell B.G."/>
            <person name="Parkhill J."/>
            <person name="Longbottom D."/>
        </authorList>
    </citation>
    <scope>NUCLEOTIDE SEQUENCE [LARGE SCALE GENOMIC DNA]</scope>
    <source>
        <strain>DSM 27085 / S26/3</strain>
    </source>
</reference>
<evidence type="ECO:0000255" key="1">
    <source>
        <dbReference type="HAMAP-Rule" id="MF_00271"/>
    </source>
</evidence>
<organism>
    <name type="scientific">Chlamydia abortus (strain DSM 27085 / S26/3)</name>
    <name type="common">Chlamydophila abortus</name>
    <dbReference type="NCBI Taxonomy" id="218497"/>
    <lineage>
        <taxon>Bacteria</taxon>
        <taxon>Pseudomonadati</taxon>
        <taxon>Chlamydiota</taxon>
        <taxon>Chlamydiia</taxon>
        <taxon>Chlamydiales</taxon>
        <taxon>Chlamydiaceae</taxon>
        <taxon>Chlamydia/Chlamydophila group</taxon>
        <taxon>Chlamydia</taxon>
    </lineage>
</organism>
<comment type="function">
    <text evidence="1">Produces ATP from ADP in the presence of a proton gradient across the membrane.</text>
</comment>
<comment type="similarity">
    <text evidence="1">Belongs to the V-ATPase D subunit family.</text>
</comment>
<gene>
    <name evidence="1" type="primary">atpD</name>
    <name type="ordered locus">CAB652</name>
</gene>
<dbReference type="EMBL" id="CR848038">
    <property type="protein sequence ID" value="CAH64099.1"/>
    <property type="molecule type" value="Genomic_DNA"/>
</dbReference>
<dbReference type="RefSeq" id="WP_011097235.1">
    <property type="nucleotide sequence ID" value="NC_004552.2"/>
</dbReference>
<dbReference type="SMR" id="Q5L5J2"/>
<dbReference type="GeneID" id="93024202"/>
<dbReference type="KEGG" id="cab:CAB652"/>
<dbReference type="eggNOG" id="COG1394">
    <property type="taxonomic scope" value="Bacteria"/>
</dbReference>
<dbReference type="HOGENOM" id="CLU_113661_0_0_0"/>
<dbReference type="OrthoDB" id="5637912at2"/>
<dbReference type="Proteomes" id="UP000001012">
    <property type="component" value="Chromosome"/>
</dbReference>
<dbReference type="GO" id="GO:0005524">
    <property type="term" value="F:ATP binding"/>
    <property type="evidence" value="ECO:0007669"/>
    <property type="project" value="UniProtKB-UniRule"/>
</dbReference>
<dbReference type="GO" id="GO:0046933">
    <property type="term" value="F:proton-transporting ATP synthase activity, rotational mechanism"/>
    <property type="evidence" value="ECO:0007669"/>
    <property type="project" value="UniProtKB-UniRule"/>
</dbReference>
<dbReference type="GO" id="GO:0046961">
    <property type="term" value="F:proton-transporting ATPase activity, rotational mechanism"/>
    <property type="evidence" value="ECO:0007669"/>
    <property type="project" value="InterPro"/>
</dbReference>
<dbReference type="GO" id="GO:0042777">
    <property type="term" value="P:proton motive force-driven plasma membrane ATP synthesis"/>
    <property type="evidence" value="ECO:0007669"/>
    <property type="project" value="UniProtKB-UniRule"/>
</dbReference>
<dbReference type="Gene3D" id="1.10.287.3240">
    <property type="match status" value="1"/>
</dbReference>
<dbReference type="HAMAP" id="MF_00271">
    <property type="entry name" value="ATP_synth_D_arch"/>
    <property type="match status" value="1"/>
</dbReference>
<dbReference type="InterPro" id="IPR002699">
    <property type="entry name" value="V_ATPase_D"/>
</dbReference>
<dbReference type="NCBIfam" id="NF002565">
    <property type="entry name" value="PRK02195.1"/>
    <property type="match status" value="1"/>
</dbReference>
<dbReference type="NCBIfam" id="TIGR00309">
    <property type="entry name" value="V_ATPase_subD"/>
    <property type="match status" value="1"/>
</dbReference>
<dbReference type="PANTHER" id="PTHR11671">
    <property type="entry name" value="V-TYPE ATP SYNTHASE SUBUNIT D"/>
    <property type="match status" value="1"/>
</dbReference>
<dbReference type="Pfam" id="PF01813">
    <property type="entry name" value="ATP-synt_D"/>
    <property type="match status" value="1"/>
</dbReference>
<sequence length="208" mass="24014">MSSQVKLTKNAYRLEKVKLSRLETYLPTLKLKKALLQVEVTNAIREASECIQAYEESRESIYAFAELYSVPLYVDAIVNSFKIERVEKEYENVTGVEVPVIKNIVLTESSYSVLDTPIWVDTLVAYSREFVVNKVRSEVAVEKQRILEDELRNVSIRVNLFEKKLIPETTRMIKKIAIFLSDRSITDVGQVKMAKKKIQQRKEESECA</sequence>
<feature type="chain" id="PRO_1000059147" description="V-type ATP synthase subunit D">
    <location>
        <begin position="1"/>
        <end position="208"/>
    </location>
</feature>
<proteinExistence type="inferred from homology"/>
<protein>
    <recommendedName>
        <fullName evidence="1">V-type ATP synthase subunit D</fullName>
    </recommendedName>
    <alternativeName>
        <fullName evidence="1">V-ATPase subunit D</fullName>
    </alternativeName>
</protein>
<accession>Q5L5J2</accession>
<keyword id="KW-0066">ATP synthesis</keyword>
<keyword id="KW-0375">Hydrogen ion transport</keyword>
<keyword id="KW-0406">Ion transport</keyword>
<keyword id="KW-0813">Transport</keyword>